<dbReference type="EMBL" id="AAYY01000001">
    <property type="protein sequence ID" value="EDP45241.1"/>
    <property type="molecule type" value="Genomic_DNA"/>
</dbReference>
<dbReference type="RefSeq" id="XP_001732455.1">
    <property type="nucleotide sequence ID" value="XM_001732403.1"/>
</dbReference>
<dbReference type="SMR" id="A8PSC0"/>
<dbReference type="FunCoup" id="A8PSC0">
    <property type="interactions" value="26"/>
</dbReference>
<dbReference type="STRING" id="425265.A8PSC0"/>
<dbReference type="GeneID" id="5856761"/>
<dbReference type="KEGG" id="mgl:MGL_0230"/>
<dbReference type="VEuPathDB" id="FungiDB:MGL_0230"/>
<dbReference type="InParanoid" id="A8PSC0"/>
<dbReference type="OMA" id="IYWERIT"/>
<dbReference type="OrthoDB" id="3356905at2759"/>
<dbReference type="Proteomes" id="UP000008837">
    <property type="component" value="Unassembled WGS sequence"/>
</dbReference>
<dbReference type="GO" id="GO:0005789">
    <property type="term" value="C:endoplasmic reticulum membrane"/>
    <property type="evidence" value="ECO:0007669"/>
    <property type="project" value="UniProtKB-SubCell"/>
</dbReference>
<dbReference type="GO" id="GO:0032865">
    <property type="term" value="C:ERMES complex"/>
    <property type="evidence" value="ECO:0007669"/>
    <property type="project" value="UniProtKB-UniRule"/>
</dbReference>
<dbReference type="GO" id="GO:0008289">
    <property type="term" value="F:lipid binding"/>
    <property type="evidence" value="ECO:0007669"/>
    <property type="project" value="UniProtKB-KW"/>
</dbReference>
<dbReference type="GO" id="GO:0000002">
    <property type="term" value="P:mitochondrial genome maintenance"/>
    <property type="evidence" value="ECO:0007669"/>
    <property type="project" value="UniProtKB-UniRule"/>
</dbReference>
<dbReference type="GO" id="GO:1990456">
    <property type="term" value="P:mitochondrion-endoplasmic reticulum membrane tethering"/>
    <property type="evidence" value="ECO:0007669"/>
    <property type="project" value="TreeGrafter"/>
</dbReference>
<dbReference type="GO" id="GO:0015914">
    <property type="term" value="P:phospholipid transport"/>
    <property type="evidence" value="ECO:0007669"/>
    <property type="project" value="TreeGrafter"/>
</dbReference>
<dbReference type="GO" id="GO:0045040">
    <property type="term" value="P:protein insertion into mitochondrial outer membrane"/>
    <property type="evidence" value="ECO:0007669"/>
    <property type="project" value="UniProtKB-UniRule"/>
</dbReference>
<dbReference type="CDD" id="cd21672">
    <property type="entry name" value="SMP_Mdm12"/>
    <property type="match status" value="1"/>
</dbReference>
<dbReference type="HAMAP" id="MF_03104">
    <property type="entry name" value="Mdm12"/>
    <property type="match status" value="1"/>
</dbReference>
<dbReference type="InterPro" id="IPR027532">
    <property type="entry name" value="Mdm12"/>
</dbReference>
<dbReference type="InterPro" id="IPR031468">
    <property type="entry name" value="SMP_LBD"/>
</dbReference>
<dbReference type="PANTHER" id="PTHR28204">
    <property type="entry name" value="MITOCHONDRIAL DISTRIBUTION AND MORPHOLOGY PROTEIN 12"/>
    <property type="match status" value="1"/>
</dbReference>
<dbReference type="PANTHER" id="PTHR28204:SF1">
    <property type="entry name" value="MITOCHONDRIAL DISTRIBUTION AND MORPHOLOGY PROTEIN 12"/>
    <property type="match status" value="1"/>
</dbReference>
<dbReference type="PROSITE" id="PS51847">
    <property type="entry name" value="SMP"/>
    <property type="match status" value="1"/>
</dbReference>
<comment type="function">
    <text evidence="1">Component of the ERMES/MDM complex, which serves as a molecular tether to connect the endoplasmic reticulum (ER) and mitochondria. Components of this complex are involved in the control of mitochondrial shape and protein biogenesis, and function in nonvesicular lipid trafficking between the ER and mitochondria. MDM12 is required for the interaction of the ER-resident membrane protein MMM1 and the outer mitochondrial membrane-resident beta-barrel protein MDM10. The MDM12-MMM1 subcomplex functions in the major beta-barrel assembly pathway that is responsible for biogenesis of all mitochondrial outer membrane beta-barrel proteins, and acts in a late step after the SAM complex. The MDM10-MDM12-MMM1 subcomplex further acts in the TOM40-specific pathway after the action of the MDM12-MMM1 complex. Essential for establishing and maintaining the structure of mitochondria and maintenance of mtDNA nucleoids.</text>
</comment>
<comment type="subunit">
    <text evidence="1">Component of the ER-mitochondria encounter structure (ERMES) or MDM complex, composed of MMM1, MDM10, MDM12 and MDM34. A MMM1 homodimer associates with one molecule of MDM12 on each side in a pairwise head-to-tail manner, and the SMP-LTD domains of MMM1 and MDM12 generate a continuous hydrophobic tunnel for phospholipid trafficking.</text>
</comment>
<comment type="subcellular location">
    <subcellularLocation>
        <location evidence="1">Mitochondrion outer membrane</location>
        <topology evidence="1">Peripheral membrane protein</topology>
        <orientation evidence="1">Cytoplasmic side</orientation>
    </subcellularLocation>
    <subcellularLocation>
        <location evidence="1">Endoplasmic reticulum membrane</location>
        <topology evidence="1">Peripheral membrane protein</topology>
        <orientation evidence="1">Cytoplasmic side</orientation>
    </subcellularLocation>
    <text evidence="1">The ERMES/MDM complex localizes to a few discrete foci (around 10 per single cell), that represent mitochondria-endoplasmic reticulum junctions. These foci are often found next to mtDNA nucleoids.</text>
</comment>
<comment type="domain">
    <text evidence="1">The SMP-LTD domain is a barrel-like domain that can bind various types of glycerophospholipids in its interior and mediate their transfer between two adjacent bilayers.</text>
</comment>
<comment type="similarity">
    <text evidence="1">Belongs to the MDM12 family.</text>
</comment>
<evidence type="ECO:0000255" key="1">
    <source>
        <dbReference type="HAMAP-Rule" id="MF_03104"/>
    </source>
</evidence>
<evidence type="ECO:0000256" key="2">
    <source>
        <dbReference type="SAM" id="MobiDB-lite"/>
    </source>
</evidence>
<gene>
    <name evidence="1" type="primary">MDM12</name>
    <name type="ORF">MGL_0230</name>
</gene>
<name>MDM12_MALGO</name>
<proteinExistence type="inferred from homology"/>
<feature type="chain" id="PRO_0000384293" description="Mitochondrial distribution and morphology protein 12">
    <location>
        <begin position="1"/>
        <end position="298"/>
    </location>
</feature>
<feature type="domain" description="SMP-LTD" evidence="1">
    <location>
        <begin position="1"/>
        <end position="298"/>
    </location>
</feature>
<feature type="region of interest" description="Disordered" evidence="2">
    <location>
        <begin position="118"/>
        <end position="142"/>
    </location>
</feature>
<feature type="compositionally biased region" description="Polar residues" evidence="2">
    <location>
        <begin position="133"/>
        <end position="142"/>
    </location>
</feature>
<protein>
    <recommendedName>
        <fullName evidence="1">Mitochondrial distribution and morphology protein 12</fullName>
    </recommendedName>
    <alternativeName>
        <fullName evidence="1">Mitochondrial inheritance component MDM12</fullName>
    </alternativeName>
</protein>
<sequence length="298" mass="33442">MSIELDWTGLEKSFADSLCERLNAALADMDMPTFLGPTRVQAIELGSEGPDVQVIHIGHVWREFREAAVHASSASDKYNARATTPPRMPMRLRTFRQYDDNDLPTSVHGGADADSIASEHEESLSRWSDTESETGTCDSSSLWEEQTRLSDIPSLQMHLSVQWLTSTMRLSLTTSLKIAYNNDTIMSLPISLVVTGMELFAQAIVALDGVHRCVYLSLSEDSTEECAPDGLRAVHDARIRTRHQGQRILPFLALESKVGESAKHVLENVGKVERFVGDMLRQWLEDELVYPHFYTLYL</sequence>
<accession>A8PSC0</accession>
<keyword id="KW-0256">Endoplasmic reticulum</keyword>
<keyword id="KW-0445">Lipid transport</keyword>
<keyword id="KW-0446">Lipid-binding</keyword>
<keyword id="KW-0472">Membrane</keyword>
<keyword id="KW-0496">Mitochondrion</keyword>
<keyword id="KW-1000">Mitochondrion outer membrane</keyword>
<keyword id="KW-1185">Reference proteome</keyword>
<keyword id="KW-0813">Transport</keyword>
<reference key="1">
    <citation type="journal article" date="2007" name="Proc. Natl. Acad. Sci. U.S.A.">
        <title>Dandruff-associated Malassezia genomes reveal convergent and divergent virulence traits shared with plant and human fungal pathogens.</title>
        <authorList>
            <person name="Xu J."/>
            <person name="Saunders C.W."/>
            <person name="Hu P."/>
            <person name="Grant R.A."/>
            <person name="Boekhout T."/>
            <person name="Kuramae E.E."/>
            <person name="Kronstad J.W."/>
            <person name="DeAngelis Y.M."/>
            <person name="Reeder N.L."/>
            <person name="Johnstone K.R."/>
            <person name="Leland M."/>
            <person name="Fieno A.M."/>
            <person name="Begley W.M."/>
            <person name="Sun Y."/>
            <person name="Lacey M.P."/>
            <person name="Chaudhary T."/>
            <person name="Keough T."/>
            <person name="Chu L."/>
            <person name="Sears R."/>
            <person name="Yuan B."/>
            <person name="Dawson T.L. Jr."/>
        </authorList>
    </citation>
    <scope>NUCLEOTIDE SEQUENCE [LARGE SCALE GENOMIC DNA]</scope>
    <source>
        <strain>ATCC MYA-4612 / CBS 7966</strain>
    </source>
</reference>
<organism>
    <name type="scientific">Malassezia globosa (strain ATCC MYA-4612 / CBS 7966)</name>
    <name type="common">Dandruff-associated fungus</name>
    <dbReference type="NCBI Taxonomy" id="425265"/>
    <lineage>
        <taxon>Eukaryota</taxon>
        <taxon>Fungi</taxon>
        <taxon>Dikarya</taxon>
        <taxon>Basidiomycota</taxon>
        <taxon>Ustilaginomycotina</taxon>
        <taxon>Malasseziomycetes</taxon>
        <taxon>Malasseziales</taxon>
        <taxon>Malasseziaceae</taxon>
        <taxon>Malassezia</taxon>
    </lineage>
</organism>